<proteinExistence type="evidence at transcript level"/>
<gene>
    <name type="primary">cgbb</name>
</gene>
<name>GTHB2_CARAU</name>
<sequence length="140" mass="15533">MGTPVKILVVLFSVIVLLAVAQSSYLPPCEPVNETVAVEKEGCPKCLVLQTTICSGHCLTKEPVYKSPFSTVYQHVCTYRDVRYETVRLPDCPPGVDPHITYPVALSCDCSLCTMDTSDCTIESLQPDFCMSQREDFLVY</sequence>
<evidence type="ECO:0000250" key="1"/>
<evidence type="ECO:0000255" key="2"/>
<evidence type="ECO:0000305" key="3"/>
<comment type="function">
    <text>Involved in gametogenesis and steroidogenesis.</text>
</comment>
<comment type="subunit">
    <text>Heterodimer of an alpha and a beta chain.</text>
</comment>
<comment type="subcellular location">
    <subcellularLocation>
        <location>Secreted</location>
    </subcellularLocation>
</comment>
<comment type="similarity">
    <text evidence="3">Belongs to the glycoprotein hormones subunit beta family.</text>
</comment>
<keyword id="KW-1015">Disulfide bond</keyword>
<keyword id="KW-0325">Glycoprotein</keyword>
<keyword id="KW-0372">Hormone</keyword>
<keyword id="KW-1185">Reference proteome</keyword>
<keyword id="KW-0964">Secreted</keyword>
<keyword id="KW-0732">Signal</keyword>
<organism>
    <name type="scientific">Carassius auratus</name>
    <name type="common">Goldfish</name>
    <dbReference type="NCBI Taxonomy" id="7957"/>
    <lineage>
        <taxon>Eukaryota</taxon>
        <taxon>Metazoa</taxon>
        <taxon>Chordata</taxon>
        <taxon>Craniata</taxon>
        <taxon>Vertebrata</taxon>
        <taxon>Euteleostomi</taxon>
        <taxon>Actinopterygii</taxon>
        <taxon>Neopterygii</taxon>
        <taxon>Teleostei</taxon>
        <taxon>Ostariophysi</taxon>
        <taxon>Cypriniformes</taxon>
        <taxon>Cyprinidae</taxon>
        <taxon>Cyprininae</taxon>
        <taxon>Carassius</taxon>
    </lineage>
</organism>
<dbReference type="EMBL" id="D88024">
    <property type="protein sequence ID" value="BAA13531.1"/>
    <property type="molecule type" value="mRNA"/>
</dbReference>
<dbReference type="EMBL" id="AB015596">
    <property type="protein sequence ID" value="BAA86658.1"/>
    <property type="molecule type" value="Genomic_DNA"/>
</dbReference>
<dbReference type="SMR" id="Q98849"/>
<dbReference type="GlyCosmos" id="Q98849">
    <property type="glycosylation" value="1 site, No reported glycans"/>
</dbReference>
<dbReference type="OrthoDB" id="8453657at2759"/>
<dbReference type="Proteomes" id="UP000515129">
    <property type="component" value="Unplaced"/>
</dbReference>
<dbReference type="GO" id="GO:0005737">
    <property type="term" value="C:cytoplasm"/>
    <property type="evidence" value="ECO:0007669"/>
    <property type="project" value="TreeGrafter"/>
</dbReference>
<dbReference type="GO" id="GO:0005615">
    <property type="term" value="C:extracellular space"/>
    <property type="evidence" value="ECO:0007669"/>
    <property type="project" value="TreeGrafter"/>
</dbReference>
<dbReference type="GO" id="GO:0005179">
    <property type="term" value="F:hormone activity"/>
    <property type="evidence" value="ECO:0007669"/>
    <property type="project" value="UniProtKB-KW"/>
</dbReference>
<dbReference type="GO" id="GO:0007186">
    <property type="term" value="P:G protein-coupled receptor signaling pathway"/>
    <property type="evidence" value="ECO:0007669"/>
    <property type="project" value="TreeGrafter"/>
</dbReference>
<dbReference type="CDD" id="cd00069">
    <property type="entry name" value="GHB_like"/>
    <property type="match status" value="1"/>
</dbReference>
<dbReference type="FunFam" id="2.10.90.10:FF:000007">
    <property type="entry name" value="Luteinizing hormone beta subunit"/>
    <property type="match status" value="1"/>
</dbReference>
<dbReference type="Gene3D" id="2.10.90.10">
    <property type="entry name" value="Cystine-knot cytokines"/>
    <property type="match status" value="1"/>
</dbReference>
<dbReference type="InterPro" id="IPR029034">
    <property type="entry name" value="Cystine-knot_cytokine"/>
</dbReference>
<dbReference type="InterPro" id="IPR006208">
    <property type="entry name" value="Glyco_hormone_CN"/>
</dbReference>
<dbReference type="InterPro" id="IPR001545">
    <property type="entry name" value="Gonadotropin_bsu"/>
</dbReference>
<dbReference type="InterPro" id="IPR018245">
    <property type="entry name" value="Gonadotropin_bsu_CS"/>
</dbReference>
<dbReference type="PANTHER" id="PTHR11515">
    <property type="entry name" value="GLYCOPROTEIN HORMONE BETA CHAIN"/>
    <property type="match status" value="1"/>
</dbReference>
<dbReference type="PANTHER" id="PTHR11515:SF11">
    <property type="entry name" value="LUTROPIN SUBUNIT BETA"/>
    <property type="match status" value="1"/>
</dbReference>
<dbReference type="Pfam" id="PF00007">
    <property type="entry name" value="Cys_knot"/>
    <property type="match status" value="1"/>
</dbReference>
<dbReference type="SMART" id="SM00068">
    <property type="entry name" value="GHB"/>
    <property type="match status" value="1"/>
</dbReference>
<dbReference type="SUPFAM" id="SSF57501">
    <property type="entry name" value="Cystine-knot cytokines"/>
    <property type="match status" value="1"/>
</dbReference>
<dbReference type="PROSITE" id="PS00261">
    <property type="entry name" value="GLYCO_HORMONE_BETA_1"/>
    <property type="match status" value="1"/>
</dbReference>
<dbReference type="PROSITE" id="PS00689">
    <property type="entry name" value="GLYCO_HORMONE_BETA_2"/>
    <property type="match status" value="1"/>
</dbReference>
<protein>
    <recommendedName>
        <fullName>Gonadotropin subunit beta-2</fullName>
    </recommendedName>
    <alternativeName>
        <fullName>GTH-II-beta</fullName>
    </alternativeName>
    <alternativeName>
        <fullName>Gonadotropin beta-II chain</fullName>
    </alternativeName>
    <alternativeName>
        <fullName>Luteinizing hormone-like GTH</fullName>
    </alternativeName>
</protein>
<feature type="signal peptide" evidence="2">
    <location>
        <begin position="1"/>
        <end position="23"/>
    </location>
</feature>
<feature type="chain" id="PRO_0000011682" description="Gonadotropin subunit beta-2">
    <location>
        <begin position="24"/>
        <end position="140"/>
    </location>
</feature>
<feature type="glycosylation site" description="N-linked (GlcNAc...) asparagine" evidence="2">
    <location>
        <position position="33"/>
    </location>
</feature>
<feature type="disulfide bond" evidence="1">
    <location>
        <begin position="29"/>
        <end position="77"/>
    </location>
</feature>
<feature type="disulfide bond" evidence="1">
    <location>
        <begin position="43"/>
        <end position="92"/>
    </location>
</feature>
<feature type="disulfide bond" evidence="1">
    <location>
        <begin position="46"/>
        <end position="130"/>
    </location>
</feature>
<feature type="disulfide bond" evidence="1">
    <location>
        <begin position="54"/>
        <end position="108"/>
    </location>
</feature>
<feature type="disulfide bond" evidence="1">
    <location>
        <begin position="58"/>
        <end position="110"/>
    </location>
</feature>
<feature type="disulfide bond" evidence="1">
    <location>
        <begin position="113"/>
        <end position="120"/>
    </location>
</feature>
<accession>Q98849</accession>
<reference key="1">
    <citation type="journal article" date="1997" name="Gen. Comp. Endocrinol.">
        <title>Molecular cloning of the cDNAs encoding two gonadotropin beta subunits (GTH-I beta and -II beta) from the goldfish, Carassius auratus.</title>
        <authorList>
            <person name="Yoshiura Y."/>
            <person name="Kobayashi M."/>
            <person name="Kato Y."/>
            <person name="Aida K."/>
        </authorList>
    </citation>
    <scope>NUCLEOTIDE SEQUENCE [MRNA]</scope>
    <source>
        <tissue>Pituitary</tissue>
    </source>
</reference>
<reference key="2">
    <citation type="journal article" date="1999" name="Fish. Sci.">
        <title>Nucleotide sequence of gonadotropin II beta subunit gene in goldfish.</title>
        <authorList>
            <person name="Sohn Y.C."/>
            <person name="Yoshiura Y."/>
            <person name="Suetake H."/>
            <person name="Kobayashi M."/>
            <person name="Aida K."/>
        </authorList>
    </citation>
    <scope>NUCLEOTIDE SEQUENCE</scope>
</reference>